<proteinExistence type="evidence at transcript level"/>
<organism>
    <name type="scientific">Hyalophora cecropia</name>
    <name type="common">Cecropia moth</name>
    <name type="synonym">Samia cecropia</name>
    <dbReference type="NCBI Taxonomy" id="7123"/>
    <lineage>
        <taxon>Eukaryota</taxon>
        <taxon>Metazoa</taxon>
        <taxon>Ecdysozoa</taxon>
        <taxon>Arthropoda</taxon>
        <taxon>Hexapoda</taxon>
        <taxon>Insecta</taxon>
        <taxon>Pterygota</taxon>
        <taxon>Neoptera</taxon>
        <taxon>Endopterygota</taxon>
        <taxon>Lepidoptera</taxon>
        <taxon>Glossata</taxon>
        <taxon>Ditrysia</taxon>
        <taxon>Bombycoidea</taxon>
        <taxon>Saturniidae</taxon>
        <taxon>Saturniinae</taxon>
        <taxon>Attacini</taxon>
        <taxon>Hyalophora</taxon>
    </lineage>
</organism>
<reference key="1">
    <citation type="journal article" date="1994" name="Ann. Entomol. Soc. Am.">
        <title>Phylogenetic utility of partial DNA sequences of G6PDH at different taxonomic levels in Hexapoda with emphasis on Diptera.</title>
        <authorList>
            <person name="Soto-Adames F.N."/>
            <person name="Robertson H.M."/>
            <person name="Berlocher S.H."/>
        </authorList>
        <dbReference type="AGRICOLA" id="IND20440286"/>
    </citation>
    <scope>NUCLEOTIDE SEQUENCE [MRNA]</scope>
</reference>
<feature type="chain" id="PRO_0000068095" description="Glucose-6-phosphate 1-dehydrogenase">
    <location>
        <begin position="1" status="less than"/>
        <end position="153" status="greater than"/>
    </location>
</feature>
<feature type="binding site" evidence="1">
    <location>
        <position position="21"/>
    </location>
    <ligand>
        <name>NADP(+)</name>
        <dbReference type="ChEBI" id="CHEBI:58349"/>
        <label>1</label>
    </ligand>
</feature>
<feature type="binding site" evidence="1">
    <location>
        <position position="120"/>
    </location>
    <ligand>
        <name>D-glucose 6-phosphate</name>
        <dbReference type="ChEBI" id="CHEBI:61548"/>
    </ligand>
</feature>
<feature type="binding site" evidence="1">
    <location>
        <position position="120"/>
    </location>
    <ligand>
        <name>NADP(+)</name>
        <dbReference type="ChEBI" id="CHEBI:58349"/>
        <label>1</label>
    </ligand>
</feature>
<feature type="non-terminal residue">
    <location>
        <position position="1"/>
    </location>
</feature>
<feature type="non-terminal residue">
    <location>
        <position position="153"/>
    </location>
</feature>
<gene>
    <name type="primary">ZW</name>
</gene>
<keyword id="KW-0119">Carbohydrate metabolism</keyword>
<keyword id="KW-0963">Cytoplasm</keyword>
<keyword id="KW-0313">Glucose metabolism</keyword>
<keyword id="KW-0521">NADP</keyword>
<keyword id="KW-0560">Oxidoreductase</keyword>
<name>G6PD_HYACE</name>
<comment type="function">
    <text evidence="1">Cytosolic glucose-6-phosphate dehydrogenase that catalyzes the first and rate-limiting step of the oxidative branch within the pentose phosphate pathway/shunt, an alternative route to glycolysis for the dissimilation of carbohydrates and a major source of reducing power and metabolic intermediates for fatty acid and nucleic acid biosynthetic processes.</text>
</comment>
<comment type="catalytic activity">
    <reaction evidence="1">
        <text>D-glucose 6-phosphate + NADP(+) = 6-phospho-D-glucono-1,5-lactone + NADPH + H(+)</text>
        <dbReference type="Rhea" id="RHEA:15841"/>
        <dbReference type="ChEBI" id="CHEBI:15378"/>
        <dbReference type="ChEBI" id="CHEBI:57783"/>
        <dbReference type="ChEBI" id="CHEBI:57955"/>
        <dbReference type="ChEBI" id="CHEBI:58349"/>
        <dbReference type="ChEBI" id="CHEBI:61548"/>
        <dbReference type="EC" id="1.1.1.49"/>
    </reaction>
    <physiologicalReaction direction="left-to-right" evidence="1">
        <dbReference type="Rhea" id="RHEA:15842"/>
    </physiologicalReaction>
</comment>
<comment type="pathway">
    <text evidence="1">Carbohydrate degradation; pentose phosphate pathway; D-ribulose 5-phosphate from D-glucose 6-phosphate (oxidative stage): step 1/3.</text>
</comment>
<comment type="subcellular location">
    <subcellularLocation>
        <location evidence="1">Cytoplasm</location>
        <location evidence="1">Cytosol</location>
    </subcellularLocation>
</comment>
<comment type="similarity">
    <text evidence="2">Belongs to the glucose-6-phosphate dehydrogenase family.</text>
</comment>
<sequence>IWYLFRDNLLPRNTKFIGYARTKQTLAEVKEKCKKYIKVRTGEEDKLEEFWAANDYLSGSYDKRVDYEFLNQVISKYEKGPIANRIFYLAVPPTVFEDATLNIRNACTSIKGFTRVIIEKPFGRDDKSSDILSKDLAGLFKEEQIYRIDHYLG</sequence>
<dbReference type="EC" id="1.1.1.49" evidence="1"/>
<dbReference type="EMBL" id="U09036">
    <property type="protein sequence ID" value="AAB02780.1"/>
    <property type="molecule type" value="mRNA"/>
</dbReference>
<dbReference type="SMR" id="Q25019"/>
<dbReference type="UniPathway" id="UPA00115">
    <property type="reaction ID" value="UER00408"/>
</dbReference>
<dbReference type="GO" id="GO:0005829">
    <property type="term" value="C:cytosol"/>
    <property type="evidence" value="ECO:0007669"/>
    <property type="project" value="UniProtKB-SubCell"/>
</dbReference>
<dbReference type="GO" id="GO:0004345">
    <property type="term" value="F:glucose-6-phosphate dehydrogenase activity"/>
    <property type="evidence" value="ECO:0007669"/>
    <property type="project" value="UniProtKB-EC"/>
</dbReference>
<dbReference type="GO" id="GO:0050661">
    <property type="term" value="F:NADP binding"/>
    <property type="evidence" value="ECO:0007669"/>
    <property type="project" value="InterPro"/>
</dbReference>
<dbReference type="GO" id="GO:0006006">
    <property type="term" value="P:glucose metabolic process"/>
    <property type="evidence" value="ECO:0007669"/>
    <property type="project" value="UniProtKB-KW"/>
</dbReference>
<dbReference type="GO" id="GO:0009051">
    <property type="term" value="P:pentose-phosphate shunt, oxidative branch"/>
    <property type="evidence" value="ECO:0007669"/>
    <property type="project" value="TreeGrafter"/>
</dbReference>
<dbReference type="Gene3D" id="3.40.50.720">
    <property type="entry name" value="NAD(P)-binding Rossmann-like Domain"/>
    <property type="match status" value="1"/>
</dbReference>
<dbReference type="InterPro" id="IPR001282">
    <property type="entry name" value="G6P_DH"/>
</dbReference>
<dbReference type="InterPro" id="IPR022674">
    <property type="entry name" value="G6P_DH_NAD-bd"/>
</dbReference>
<dbReference type="InterPro" id="IPR036291">
    <property type="entry name" value="NAD(P)-bd_dom_sf"/>
</dbReference>
<dbReference type="PANTHER" id="PTHR23429:SF0">
    <property type="entry name" value="GLUCOSE-6-PHOSPHATE 1-DEHYDROGENASE"/>
    <property type="match status" value="1"/>
</dbReference>
<dbReference type="PANTHER" id="PTHR23429">
    <property type="entry name" value="GLUCOSE-6-PHOSPHATE 1-DEHYDROGENASE G6PD"/>
    <property type="match status" value="1"/>
</dbReference>
<dbReference type="Pfam" id="PF00479">
    <property type="entry name" value="G6PD_N"/>
    <property type="match status" value="1"/>
</dbReference>
<dbReference type="PRINTS" id="PR00079">
    <property type="entry name" value="G6PDHDRGNASE"/>
</dbReference>
<dbReference type="SUPFAM" id="SSF51735">
    <property type="entry name" value="NAD(P)-binding Rossmann-fold domains"/>
    <property type="match status" value="1"/>
</dbReference>
<evidence type="ECO:0000250" key="1">
    <source>
        <dbReference type="UniProtKB" id="P11413"/>
    </source>
</evidence>
<evidence type="ECO:0000305" key="2"/>
<protein>
    <recommendedName>
        <fullName>Glucose-6-phosphate 1-dehydrogenase</fullName>
        <shortName>G6PD</shortName>
        <ecNumber evidence="1">1.1.1.49</ecNumber>
    </recommendedName>
    <alternativeName>
        <fullName>Zwischenferment</fullName>
    </alternativeName>
</protein>
<accession>Q25019</accession>